<reference key="1">
    <citation type="journal article" date="2004" name="Nat. Biotechnol.">
        <title>The genome sequence of the anaerobic, sulfate-reducing bacterium Desulfovibrio vulgaris Hildenborough.</title>
        <authorList>
            <person name="Heidelberg J.F."/>
            <person name="Seshadri R."/>
            <person name="Haveman S.A."/>
            <person name="Hemme C.L."/>
            <person name="Paulsen I.T."/>
            <person name="Kolonay J.F."/>
            <person name="Eisen J.A."/>
            <person name="Ward N.L."/>
            <person name="Methe B.A."/>
            <person name="Brinkac L.M."/>
            <person name="Daugherty S.C."/>
            <person name="DeBoy R.T."/>
            <person name="Dodson R.J."/>
            <person name="Durkin A.S."/>
            <person name="Madupu R."/>
            <person name="Nelson W.C."/>
            <person name="Sullivan S.A."/>
            <person name="Fouts D.E."/>
            <person name="Haft D.H."/>
            <person name="Selengut J."/>
            <person name="Peterson J.D."/>
            <person name="Davidsen T.M."/>
            <person name="Zafar N."/>
            <person name="Zhou L."/>
            <person name="Radune D."/>
            <person name="Dimitrov G."/>
            <person name="Hance M."/>
            <person name="Tran K."/>
            <person name="Khouri H.M."/>
            <person name="Gill J."/>
            <person name="Utterback T.R."/>
            <person name="Feldblyum T.V."/>
            <person name="Wall J.D."/>
            <person name="Voordouw G."/>
            <person name="Fraser C.M."/>
        </authorList>
    </citation>
    <scope>NUCLEOTIDE SEQUENCE [LARGE SCALE GENOMIC DNA]</scope>
    <source>
        <strain>ATCC 29579 / DSM 644 / CCUG 34227 / NCIMB 8303 / VKM B-1760 / Hildenborough</strain>
    </source>
</reference>
<dbReference type="EMBL" id="AE017285">
    <property type="protein sequence ID" value="AAS95797.1"/>
    <property type="molecule type" value="Genomic_DNA"/>
</dbReference>
<dbReference type="RefSeq" id="WP_010938614.1">
    <property type="nucleotide sequence ID" value="NC_002937.3"/>
</dbReference>
<dbReference type="RefSeq" id="YP_010538.1">
    <property type="nucleotide sequence ID" value="NC_002937.3"/>
</dbReference>
<dbReference type="SMR" id="Q72CG4"/>
<dbReference type="STRING" id="882.DVU_1319"/>
<dbReference type="PaxDb" id="882-DVU_1319"/>
<dbReference type="EnsemblBacteria" id="AAS95797">
    <property type="protein sequence ID" value="AAS95797"/>
    <property type="gene ID" value="DVU_1319"/>
</dbReference>
<dbReference type="KEGG" id="dvu:DVU_1319"/>
<dbReference type="PATRIC" id="fig|882.5.peg.1231"/>
<dbReference type="eggNOG" id="COG0256">
    <property type="taxonomic scope" value="Bacteria"/>
</dbReference>
<dbReference type="HOGENOM" id="CLU_098841_0_1_7"/>
<dbReference type="OrthoDB" id="9810939at2"/>
<dbReference type="PhylomeDB" id="Q72CG4"/>
<dbReference type="Proteomes" id="UP000002194">
    <property type="component" value="Chromosome"/>
</dbReference>
<dbReference type="GO" id="GO:0022625">
    <property type="term" value="C:cytosolic large ribosomal subunit"/>
    <property type="evidence" value="ECO:0007669"/>
    <property type="project" value="TreeGrafter"/>
</dbReference>
<dbReference type="GO" id="GO:0008097">
    <property type="term" value="F:5S rRNA binding"/>
    <property type="evidence" value="ECO:0007669"/>
    <property type="project" value="TreeGrafter"/>
</dbReference>
<dbReference type="GO" id="GO:0003735">
    <property type="term" value="F:structural constituent of ribosome"/>
    <property type="evidence" value="ECO:0007669"/>
    <property type="project" value="InterPro"/>
</dbReference>
<dbReference type="GO" id="GO:0006412">
    <property type="term" value="P:translation"/>
    <property type="evidence" value="ECO:0007669"/>
    <property type="project" value="UniProtKB-UniRule"/>
</dbReference>
<dbReference type="CDD" id="cd00432">
    <property type="entry name" value="Ribosomal_L18_L5e"/>
    <property type="match status" value="1"/>
</dbReference>
<dbReference type="FunFam" id="3.30.420.100:FF:000001">
    <property type="entry name" value="50S ribosomal protein L18"/>
    <property type="match status" value="1"/>
</dbReference>
<dbReference type="Gene3D" id="3.30.420.100">
    <property type="match status" value="1"/>
</dbReference>
<dbReference type="HAMAP" id="MF_01337_B">
    <property type="entry name" value="Ribosomal_uL18_B"/>
    <property type="match status" value="1"/>
</dbReference>
<dbReference type="InterPro" id="IPR004389">
    <property type="entry name" value="Ribosomal_uL18_bac-type"/>
</dbReference>
<dbReference type="InterPro" id="IPR005484">
    <property type="entry name" value="Ribosomal_uL18_bac/euk"/>
</dbReference>
<dbReference type="NCBIfam" id="TIGR00060">
    <property type="entry name" value="L18_bact"/>
    <property type="match status" value="1"/>
</dbReference>
<dbReference type="PANTHER" id="PTHR12899">
    <property type="entry name" value="39S RIBOSOMAL PROTEIN L18, MITOCHONDRIAL"/>
    <property type="match status" value="1"/>
</dbReference>
<dbReference type="PANTHER" id="PTHR12899:SF3">
    <property type="entry name" value="LARGE RIBOSOMAL SUBUNIT PROTEIN UL18M"/>
    <property type="match status" value="1"/>
</dbReference>
<dbReference type="Pfam" id="PF00861">
    <property type="entry name" value="Ribosomal_L18p"/>
    <property type="match status" value="1"/>
</dbReference>
<dbReference type="SUPFAM" id="SSF53137">
    <property type="entry name" value="Translational machinery components"/>
    <property type="match status" value="1"/>
</dbReference>
<organism>
    <name type="scientific">Nitratidesulfovibrio vulgaris (strain ATCC 29579 / DSM 644 / CCUG 34227 / NCIMB 8303 / VKM B-1760 / Hildenborough)</name>
    <name type="common">Desulfovibrio vulgaris</name>
    <dbReference type="NCBI Taxonomy" id="882"/>
    <lineage>
        <taxon>Bacteria</taxon>
        <taxon>Pseudomonadati</taxon>
        <taxon>Thermodesulfobacteriota</taxon>
        <taxon>Desulfovibrionia</taxon>
        <taxon>Desulfovibrionales</taxon>
        <taxon>Desulfovibrionaceae</taxon>
        <taxon>Nitratidesulfovibrio</taxon>
    </lineage>
</organism>
<comment type="function">
    <text evidence="1">This is one of the proteins that bind and probably mediate the attachment of the 5S RNA into the large ribosomal subunit, where it forms part of the central protuberance.</text>
</comment>
<comment type="subunit">
    <text evidence="1">Part of the 50S ribosomal subunit; part of the 5S rRNA/L5/L18/L25 subcomplex. Contacts the 5S and 23S rRNAs.</text>
</comment>
<comment type="similarity">
    <text evidence="1">Belongs to the universal ribosomal protein uL18 family.</text>
</comment>
<gene>
    <name evidence="1" type="primary">rplR</name>
    <name type="ordered locus">DVU_1319</name>
</gene>
<feature type="chain" id="PRO_0000131257" description="Large ribosomal subunit protein uL18">
    <location>
        <begin position="1"/>
        <end position="119"/>
    </location>
</feature>
<accession>Q72CG4</accession>
<name>RL18_NITV2</name>
<proteinExistence type="inferred from homology"/>
<sequence length="119" mass="13270">MKFTKNEARLRRKVRIRKKISGTAERPRLVVYRSNLHIYAQIVDDTTGSTLVATSTLSISRTQEGVHANKAGAELVGKEIARLAKDKDIQSVVFDRNGYLYHGRIKAVADGAREAGLEF</sequence>
<evidence type="ECO:0000255" key="1">
    <source>
        <dbReference type="HAMAP-Rule" id="MF_01337"/>
    </source>
</evidence>
<evidence type="ECO:0000305" key="2"/>
<keyword id="KW-1185">Reference proteome</keyword>
<keyword id="KW-0687">Ribonucleoprotein</keyword>
<keyword id="KW-0689">Ribosomal protein</keyword>
<keyword id="KW-0694">RNA-binding</keyword>
<keyword id="KW-0699">rRNA-binding</keyword>
<protein>
    <recommendedName>
        <fullName evidence="1">Large ribosomal subunit protein uL18</fullName>
    </recommendedName>
    <alternativeName>
        <fullName evidence="2">50S ribosomal protein L18</fullName>
    </alternativeName>
</protein>